<proteinExistence type="inferred from homology"/>
<sequence>MVKEISVGNIKIGGDRPLVLVAGPCVIENEAATLRCAERLMTICNGVSMPLIFKASYDKANRTSVNSFRGPGLKDGLKILKKVKESLGVPVLSDIHSIEQVEPAAEVLDVIQIPAFLCRQTDLVVAAAMSGRVINIKKGQFLAPWDMENVVGKAVSTGNDNVILTERGVSFGYNNLVSDMRSFPILRQTGYPVIFDATHSVQLPGGLGGSSGGQREFVEYLGRAAVATGIDGIFMEVHEDPEKALCDGPNSVKLDDLPALLKKLKAIDAIVK</sequence>
<protein>
    <recommendedName>
        <fullName evidence="1">2-dehydro-3-deoxyphosphooctonate aldolase</fullName>
        <ecNumber evidence="1">2.5.1.55</ecNumber>
    </recommendedName>
    <alternativeName>
        <fullName evidence="1">3-deoxy-D-manno-octulosonic acid 8-phosphate synthase</fullName>
    </alternativeName>
    <alternativeName>
        <fullName evidence="1">KDO-8-phosphate synthase</fullName>
        <shortName evidence="1">KDO 8-P synthase</shortName>
        <shortName evidence="1">KDOPS</shortName>
    </alternativeName>
    <alternativeName>
        <fullName evidence="1">Phospho-2-dehydro-3-deoxyoctonate aldolase</fullName>
    </alternativeName>
</protein>
<dbReference type="EC" id="2.5.1.55" evidence="1"/>
<dbReference type="EMBL" id="CP001390">
    <property type="protein sequence ID" value="ACM20628.1"/>
    <property type="molecule type" value="Genomic_DNA"/>
</dbReference>
<dbReference type="RefSeq" id="WP_012647357.1">
    <property type="nucleotide sequence ID" value="NC_011979.1"/>
</dbReference>
<dbReference type="SMR" id="B9M9Q6"/>
<dbReference type="STRING" id="316067.Geob_2274"/>
<dbReference type="KEGG" id="geo:Geob_2274"/>
<dbReference type="eggNOG" id="COG2877">
    <property type="taxonomic scope" value="Bacteria"/>
</dbReference>
<dbReference type="HOGENOM" id="CLU_036666_0_0_7"/>
<dbReference type="OrthoDB" id="9802281at2"/>
<dbReference type="UniPathway" id="UPA00030"/>
<dbReference type="UniPathway" id="UPA00357">
    <property type="reaction ID" value="UER00474"/>
</dbReference>
<dbReference type="Proteomes" id="UP000007721">
    <property type="component" value="Chromosome"/>
</dbReference>
<dbReference type="GO" id="GO:0005737">
    <property type="term" value="C:cytoplasm"/>
    <property type="evidence" value="ECO:0007669"/>
    <property type="project" value="UniProtKB-SubCell"/>
</dbReference>
<dbReference type="GO" id="GO:0008676">
    <property type="term" value="F:3-deoxy-8-phosphooctulonate synthase activity"/>
    <property type="evidence" value="ECO:0007669"/>
    <property type="project" value="UniProtKB-UniRule"/>
</dbReference>
<dbReference type="GO" id="GO:0019294">
    <property type="term" value="P:keto-3-deoxy-D-manno-octulosonic acid biosynthetic process"/>
    <property type="evidence" value="ECO:0007669"/>
    <property type="project" value="UniProtKB-UniRule"/>
</dbReference>
<dbReference type="Gene3D" id="3.20.20.70">
    <property type="entry name" value="Aldolase class I"/>
    <property type="match status" value="1"/>
</dbReference>
<dbReference type="HAMAP" id="MF_00056">
    <property type="entry name" value="KDO8P_synth"/>
    <property type="match status" value="1"/>
</dbReference>
<dbReference type="InterPro" id="IPR013785">
    <property type="entry name" value="Aldolase_TIM"/>
</dbReference>
<dbReference type="InterPro" id="IPR006218">
    <property type="entry name" value="DAHP1/KDSA"/>
</dbReference>
<dbReference type="InterPro" id="IPR006269">
    <property type="entry name" value="KDO8P_synthase"/>
</dbReference>
<dbReference type="NCBIfam" id="TIGR01362">
    <property type="entry name" value="KDO8P_synth"/>
    <property type="match status" value="1"/>
</dbReference>
<dbReference type="NCBIfam" id="NF003543">
    <property type="entry name" value="PRK05198.1"/>
    <property type="match status" value="1"/>
</dbReference>
<dbReference type="PANTHER" id="PTHR21057">
    <property type="entry name" value="PHOSPHO-2-DEHYDRO-3-DEOXYHEPTONATE ALDOLASE"/>
    <property type="match status" value="1"/>
</dbReference>
<dbReference type="Pfam" id="PF00793">
    <property type="entry name" value="DAHP_synth_1"/>
    <property type="match status" value="1"/>
</dbReference>
<dbReference type="SUPFAM" id="SSF51569">
    <property type="entry name" value="Aldolase"/>
    <property type="match status" value="1"/>
</dbReference>
<keyword id="KW-0963">Cytoplasm</keyword>
<keyword id="KW-0448">Lipopolysaccharide biosynthesis</keyword>
<keyword id="KW-1185">Reference proteome</keyword>
<keyword id="KW-0808">Transferase</keyword>
<gene>
    <name evidence="1" type="primary">kdsA</name>
    <name type="ordered locus">Geob_2274</name>
</gene>
<comment type="catalytic activity">
    <reaction evidence="1">
        <text>D-arabinose 5-phosphate + phosphoenolpyruvate + H2O = 3-deoxy-alpha-D-manno-2-octulosonate-8-phosphate + phosphate</text>
        <dbReference type="Rhea" id="RHEA:14053"/>
        <dbReference type="ChEBI" id="CHEBI:15377"/>
        <dbReference type="ChEBI" id="CHEBI:43474"/>
        <dbReference type="ChEBI" id="CHEBI:57693"/>
        <dbReference type="ChEBI" id="CHEBI:58702"/>
        <dbReference type="ChEBI" id="CHEBI:85985"/>
        <dbReference type="EC" id="2.5.1.55"/>
    </reaction>
</comment>
<comment type="pathway">
    <text evidence="1">Carbohydrate biosynthesis; 3-deoxy-D-manno-octulosonate biosynthesis; 3-deoxy-D-manno-octulosonate from D-ribulose 5-phosphate: step 2/3.</text>
</comment>
<comment type="pathway">
    <text evidence="1">Bacterial outer membrane biogenesis; lipopolysaccharide biosynthesis.</text>
</comment>
<comment type="subcellular location">
    <subcellularLocation>
        <location evidence="1">Cytoplasm</location>
    </subcellularLocation>
</comment>
<comment type="similarity">
    <text evidence="1">Belongs to the KdsA family.</text>
</comment>
<name>KDSA_GEODF</name>
<reference key="1">
    <citation type="submission" date="2009-01" db="EMBL/GenBank/DDBJ databases">
        <title>Complete sequence of Geobacter sp. FRC-32.</title>
        <authorList>
            <consortium name="US DOE Joint Genome Institute"/>
            <person name="Lucas S."/>
            <person name="Copeland A."/>
            <person name="Lapidus A."/>
            <person name="Glavina del Rio T."/>
            <person name="Dalin E."/>
            <person name="Tice H."/>
            <person name="Bruce D."/>
            <person name="Goodwin L."/>
            <person name="Pitluck S."/>
            <person name="Saunders E."/>
            <person name="Brettin T."/>
            <person name="Detter J.C."/>
            <person name="Han C."/>
            <person name="Larimer F."/>
            <person name="Land M."/>
            <person name="Hauser L."/>
            <person name="Kyrpides N."/>
            <person name="Ovchinnikova G."/>
            <person name="Kostka J."/>
            <person name="Richardson P."/>
        </authorList>
    </citation>
    <scope>NUCLEOTIDE SEQUENCE [LARGE SCALE GENOMIC DNA]</scope>
    <source>
        <strain>DSM 22248 / JCM 15807 / FRC-32</strain>
    </source>
</reference>
<accession>B9M9Q6</accession>
<organism>
    <name type="scientific">Geotalea daltonii (strain DSM 22248 / JCM 15807 / FRC-32)</name>
    <name type="common">Geobacter daltonii</name>
    <dbReference type="NCBI Taxonomy" id="316067"/>
    <lineage>
        <taxon>Bacteria</taxon>
        <taxon>Pseudomonadati</taxon>
        <taxon>Thermodesulfobacteriota</taxon>
        <taxon>Desulfuromonadia</taxon>
        <taxon>Geobacterales</taxon>
        <taxon>Geobacteraceae</taxon>
        <taxon>Geotalea</taxon>
    </lineage>
</organism>
<feature type="chain" id="PRO_1000117783" description="2-dehydro-3-deoxyphosphooctonate aldolase">
    <location>
        <begin position="1"/>
        <end position="272"/>
    </location>
</feature>
<evidence type="ECO:0000255" key="1">
    <source>
        <dbReference type="HAMAP-Rule" id="MF_00056"/>
    </source>
</evidence>